<protein>
    <recommendedName>
        <fullName evidence="1">Phosphoribosylaminoimidazole-succinocarboxamide synthase</fullName>
        <ecNumber evidence="1">6.3.2.6</ecNumber>
    </recommendedName>
    <alternativeName>
        <fullName evidence="1">SAICAR synthetase</fullName>
    </alternativeName>
</protein>
<feature type="chain" id="PRO_1000018764" description="Phosphoribosylaminoimidazole-succinocarboxamide synthase">
    <location>
        <begin position="1"/>
        <end position="240"/>
    </location>
</feature>
<keyword id="KW-0067">ATP-binding</keyword>
<keyword id="KW-0436">Ligase</keyword>
<keyword id="KW-0547">Nucleotide-binding</keyword>
<keyword id="KW-0658">Purine biosynthesis</keyword>
<evidence type="ECO:0000255" key="1">
    <source>
        <dbReference type="HAMAP-Rule" id="MF_00137"/>
    </source>
</evidence>
<proteinExistence type="inferred from homology"/>
<reference key="1">
    <citation type="submission" date="2007-02" db="EMBL/GenBank/DDBJ databases">
        <title>Complete sequence of Pyrobaculum calidifontis JCM 11548.</title>
        <authorList>
            <consortium name="US DOE Joint Genome Institute"/>
            <person name="Copeland A."/>
            <person name="Lucas S."/>
            <person name="Lapidus A."/>
            <person name="Barry K."/>
            <person name="Glavina del Rio T."/>
            <person name="Dalin E."/>
            <person name="Tice H."/>
            <person name="Pitluck S."/>
            <person name="Chain P."/>
            <person name="Malfatti S."/>
            <person name="Shin M."/>
            <person name="Vergez L."/>
            <person name="Schmutz J."/>
            <person name="Larimer F."/>
            <person name="Land M."/>
            <person name="Hauser L."/>
            <person name="Kyrpides N."/>
            <person name="Mikhailova N."/>
            <person name="Cozen A.E."/>
            <person name="Fitz-Gibbon S.T."/>
            <person name="House C.H."/>
            <person name="Saltikov C."/>
            <person name="Lowe T.M."/>
            <person name="Richardson P."/>
        </authorList>
    </citation>
    <scope>NUCLEOTIDE SEQUENCE [LARGE SCALE GENOMIC DNA]</scope>
    <source>
        <strain>DSM 21063 / JCM 11548 / VA1</strain>
    </source>
</reference>
<accession>A3MXE4</accession>
<name>PUR7_PYRCJ</name>
<gene>
    <name evidence="1" type="primary">purC</name>
    <name type="ordered locus">Pcal_1895</name>
</gene>
<organism>
    <name type="scientific">Pyrobaculum calidifontis (strain DSM 21063 / JCM 11548 / VA1)</name>
    <dbReference type="NCBI Taxonomy" id="410359"/>
    <lineage>
        <taxon>Archaea</taxon>
        <taxon>Thermoproteota</taxon>
        <taxon>Thermoprotei</taxon>
        <taxon>Thermoproteales</taxon>
        <taxon>Thermoproteaceae</taxon>
        <taxon>Pyrobaculum</taxon>
    </lineage>
</organism>
<dbReference type="EC" id="6.3.2.6" evidence="1"/>
<dbReference type="EMBL" id="CP000561">
    <property type="protein sequence ID" value="ABO09311.1"/>
    <property type="molecule type" value="Genomic_DNA"/>
</dbReference>
<dbReference type="SMR" id="A3MXE4"/>
<dbReference type="STRING" id="410359.Pcal_1895"/>
<dbReference type="KEGG" id="pcl:Pcal_1895"/>
<dbReference type="eggNOG" id="arCOG04421">
    <property type="taxonomic scope" value="Archaea"/>
</dbReference>
<dbReference type="HOGENOM" id="CLU_061495_0_0_2"/>
<dbReference type="UniPathway" id="UPA00074">
    <property type="reaction ID" value="UER00131"/>
</dbReference>
<dbReference type="Proteomes" id="UP000001431">
    <property type="component" value="Chromosome"/>
</dbReference>
<dbReference type="GO" id="GO:0005524">
    <property type="term" value="F:ATP binding"/>
    <property type="evidence" value="ECO:0007669"/>
    <property type="project" value="UniProtKB-KW"/>
</dbReference>
<dbReference type="GO" id="GO:0004639">
    <property type="term" value="F:phosphoribosylaminoimidazolesuccinocarboxamide synthase activity"/>
    <property type="evidence" value="ECO:0007669"/>
    <property type="project" value="UniProtKB-UniRule"/>
</dbReference>
<dbReference type="GO" id="GO:0006189">
    <property type="term" value="P:'de novo' IMP biosynthetic process"/>
    <property type="evidence" value="ECO:0007669"/>
    <property type="project" value="UniProtKB-UniRule"/>
</dbReference>
<dbReference type="GO" id="GO:0009236">
    <property type="term" value="P:cobalamin biosynthetic process"/>
    <property type="evidence" value="ECO:0007669"/>
    <property type="project" value="InterPro"/>
</dbReference>
<dbReference type="CDD" id="cd01415">
    <property type="entry name" value="SAICAR_synt_PurC"/>
    <property type="match status" value="1"/>
</dbReference>
<dbReference type="Gene3D" id="3.30.470.20">
    <property type="entry name" value="ATP-grasp fold, B domain"/>
    <property type="match status" value="1"/>
</dbReference>
<dbReference type="Gene3D" id="3.30.200.20">
    <property type="entry name" value="Phosphorylase Kinase, domain 1"/>
    <property type="match status" value="1"/>
</dbReference>
<dbReference type="HAMAP" id="MF_00137">
    <property type="entry name" value="SAICAR_synth"/>
    <property type="match status" value="1"/>
</dbReference>
<dbReference type="InterPro" id="IPR028923">
    <property type="entry name" value="SAICAR_synt/ADE2_N"/>
</dbReference>
<dbReference type="InterPro" id="IPR033934">
    <property type="entry name" value="SAICAR_synt_PurC"/>
</dbReference>
<dbReference type="InterPro" id="IPR050089">
    <property type="entry name" value="SAICAR_synthetase"/>
</dbReference>
<dbReference type="PANTHER" id="PTHR43599">
    <property type="entry name" value="MULTIFUNCTIONAL PROTEIN ADE2"/>
    <property type="match status" value="1"/>
</dbReference>
<dbReference type="PANTHER" id="PTHR43599:SF3">
    <property type="entry name" value="SI:DKEY-6E2.2"/>
    <property type="match status" value="1"/>
</dbReference>
<dbReference type="Pfam" id="PF01259">
    <property type="entry name" value="SAICAR_synt"/>
    <property type="match status" value="1"/>
</dbReference>
<dbReference type="SUPFAM" id="SSF56104">
    <property type="entry name" value="SAICAR synthase-like"/>
    <property type="match status" value="1"/>
</dbReference>
<comment type="catalytic activity">
    <reaction evidence="1">
        <text>5-amino-1-(5-phospho-D-ribosyl)imidazole-4-carboxylate + L-aspartate + ATP = (2S)-2-[5-amino-1-(5-phospho-beta-D-ribosyl)imidazole-4-carboxamido]succinate + ADP + phosphate + 2 H(+)</text>
        <dbReference type="Rhea" id="RHEA:22628"/>
        <dbReference type="ChEBI" id="CHEBI:15378"/>
        <dbReference type="ChEBI" id="CHEBI:29991"/>
        <dbReference type="ChEBI" id="CHEBI:30616"/>
        <dbReference type="ChEBI" id="CHEBI:43474"/>
        <dbReference type="ChEBI" id="CHEBI:58443"/>
        <dbReference type="ChEBI" id="CHEBI:77657"/>
        <dbReference type="ChEBI" id="CHEBI:456216"/>
        <dbReference type="EC" id="6.3.2.6"/>
    </reaction>
</comment>
<comment type="pathway">
    <text evidence="1">Purine metabolism; IMP biosynthesis via de novo pathway; 5-amino-1-(5-phospho-D-ribosyl)imidazole-4-carboxamide from 5-amino-1-(5-phospho-D-ribosyl)imidazole-4-carboxylate: step 1/2.</text>
</comment>
<comment type="similarity">
    <text evidence="1">Belongs to the SAICAR synthetase family.</text>
</comment>
<sequence length="240" mass="26555">MGFMELVYEGKAKAVYKTREGLLMVFKDEVTAGDGARRDKAPGKGALAAETSTLLFQYLQGRGVTTHYLMFVPPNAILVKPAQVPPLEVIVRFKAYGSYLKRMPKAKPLTPFAKPIVEFHYKDDSLHDPLILEDDVVEAGLLTAGELAAVKDMALRAASALRELYASVDCDFVDVKFEFGRVGGELVLVDEVSGDTFRLLCGGEHFDKEYYRKTGDAVGLVERYAKLLELTKLALSRQKV</sequence>